<feature type="chain" id="PRO_0000412039" description="CASP-like protein 2A2">
    <location>
        <begin position="1"/>
        <end position="230"/>
    </location>
</feature>
<feature type="topological domain" description="Cytoplasmic" evidence="2">
    <location>
        <begin position="1"/>
        <end position="29"/>
    </location>
</feature>
<feature type="transmembrane region" description="Helical" evidence="2">
    <location>
        <begin position="30"/>
        <end position="50"/>
    </location>
</feature>
<feature type="topological domain" description="Extracellular" evidence="2">
    <location>
        <begin position="51"/>
        <end position="71"/>
    </location>
</feature>
<feature type="transmembrane region" description="Helical" evidence="2">
    <location>
        <begin position="72"/>
        <end position="92"/>
    </location>
</feature>
<feature type="topological domain" description="Cytoplasmic" evidence="2">
    <location>
        <begin position="93"/>
        <end position="100"/>
    </location>
</feature>
<feature type="transmembrane region" description="Helical" evidence="2">
    <location>
        <begin position="101"/>
        <end position="121"/>
    </location>
</feature>
<feature type="topological domain" description="Extracellular" evidence="2">
    <location>
        <begin position="122"/>
        <end position="151"/>
    </location>
</feature>
<feature type="transmembrane region" description="Helical" evidence="2">
    <location>
        <begin position="152"/>
        <end position="172"/>
    </location>
</feature>
<feature type="topological domain" description="Cytoplasmic" evidence="2">
    <location>
        <begin position="173"/>
        <end position="230"/>
    </location>
</feature>
<feature type="region of interest" description="Disordered" evidence="3">
    <location>
        <begin position="1"/>
        <end position="23"/>
    </location>
</feature>
<evidence type="ECO:0000250" key="1"/>
<evidence type="ECO:0000255" key="2"/>
<evidence type="ECO:0000256" key="3">
    <source>
        <dbReference type="SAM" id="MobiDB-lite"/>
    </source>
</evidence>
<evidence type="ECO:0000305" key="4"/>
<accession>B9GHX8</accession>
<reference key="1">
    <citation type="journal article" date="2006" name="Science">
        <title>The genome of black cottonwood, Populus trichocarpa (Torr. &amp; Gray).</title>
        <authorList>
            <person name="Tuskan G.A."/>
            <person name="Difazio S."/>
            <person name="Jansson S."/>
            <person name="Bohlmann J."/>
            <person name="Grigoriev I."/>
            <person name="Hellsten U."/>
            <person name="Putnam N."/>
            <person name="Ralph S."/>
            <person name="Rombauts S."/>
            <person name="Salamov A."/>
            <person name="Schein J."/>
            <person name="Sterck L."/>
            <person name="Aerts A."/>
            <person name="Bhalerao R.R."/>
            <person name="Bhalerao R.P."/>
            <person name="Blaudez D."/>
            <person name="Boerjan W."/>
            <person name="Brun A."/>
            <person name="Brunner A."/>
            <person name="Busov V."/>
            <person name="Campbell M."/>
            <person name="Carlson J."/>
            <person name="Chalot M."/>
            <person name="Chapman J."/>
            <person name="Chen G.-L."/>
            <person name="Cooper D."/>
            <person name="Coutinho P.M."/>
            <person name="Couturier J."/>
            <person name="Covert S."/>
            <person name="Cronk Q."/>
            <person name="Cunningham R."/>
            <person name="Davis J."/>
            <person name="Degroeve S."/>
            <person name="Dejardin A."/>
            <person name="dePamphilis C.W."/>
            <person name="Detter J."/>
            <person name="Dirks B."/>
            <person name="Dubchak I."/>
            <person name="Duplessis S."/>
            <person name="Ehlting J."/>
            <person name="Ellis B."/>
            <person name="Gendler K."/>
            <person name="Goodstein D."/>
            <person name="Gribskov M."/>
            <person name="Grimwood J."/>
            <person name="Groover A."/>
            <person name="Gunter L."/>
            <person name="Hamberger B."/>
            <person name="Heinze B."/>
            <person name="Helariutta Y."/>
            <person name="Henrissat B."/>
            <person name="Holligan D."/>
            <person name="Holt R."/>
            <person name="Huang W."/>
            <person name="Islam-Faridi N."/>
            <person name="Jones S."/>
            <person name="Jones-Rhoades M."/>
            <person name="Jorgensen R."/>
            <person name="Joshi C."/>
            <person name="Kangasjaervi J."/>
            <person name="Karlsson J."/>
            <person name="Kelleher C."/>
            <person name="Kirkpatrick R."/>
            <person name="Kirst M."/>
            <person name="Kohler A."/>
            <person name="Kalluri U."/>
            <person name="Larimer F."/>
            <person name="Leebens-Mack J."/>
            <person name="Leple J.-C."/>
            <person name="Locascio P."/>
            <person name="Lou Y."/>
            <person name="Lucas S."/>
            <person name="Martin F."/>
            <person name="Montanini B."/>
            <person name="Napoli C."/>
            <person name="Nelson D.R."/>
            <person name="Nelson C."/>
            <person name="Nieminen K."/>
            <person name="Nilsson O."/>
            <person name="Pereda V."/>
            <person name="Peter G."/>
            <person name="Philippe R."/>
            <person name="Pilate G."/>
            <person name="Poliakov A."/>
            <person name="Razumovskaya J."/>
            <person name="Richardson P."/>
            <person name="Rinaldi C."/>
            <person name="Ritland K."/>
            <person name="Rouze P."/>
            <person name="Ryaboy D."/>
            <person name="Schmutz J."/>
            <person name="Schrader J."/>
            <person name="Segerman B."/>
            <person name="Shin H."/>
            <person name="Siddiqui A."/>
            <person name="Sterky F."/>
            <person name="Terry A."/>
            <person name="Tsai C.-J."/>
            <person name="Uberbacher E."/>
            <person name="Unneberg P."/>
            <person name="Vahala J."/>
            <person name="Wall K."/>
            <person name="Wessler S."/>
            <person name="Yang G."/>
            <person name="Yin T."/>
            <person name="Douglas C."/>
            <person name="Marra M."/>
            <person name="Sandberg G."/>
            <person name="Van de Peer Y."/>
            <person name="Rokhsar D.S."/>
        </authorList>
    </citation>
    <scope>NUCLEOTIDE SEQUENCE [LARGE SCALE GENOMIC DNA]</scope>
    <source>
        <strain>cv. Nisqually</strain>
    </source>
</reference>
<reference key="2">
    <citation type="submission" date="2008-12" db="EMBL/GenBank/DDBJ databases">
        <authorList>
            <consortium name="US DOE Joint Genome Institute (JGI-PGF)"/>
            <person name="Grigoriev I.V."/>
            <person name="Terry A."/>
            <person name="Salamov A.A."/>
            <person name="Otillar R."/>
            <person name="Lou Y."/>
            <person name="Lucas S."/>
            <person name="Hammon N."/>
            <person name="Glavina del Rio T."/>
            <person name="Detter J."/>
            <person name="Kalin E."/>
            <person name="Tice H."/>
            <person name="Pitluck S."/>
            <person name="Chapman J."/>
            <person name="Putnam N.H."/>
            <person name="Brunner A."/>
            <person name="Busov V."/>
            <person name="Campbell M."/>
            <person name="Chalot M."/>
            <person name="Covert S."/>
            <person name="Davis J."/>
            <person name="DiFazio S."/>
            <person name="Gribskov M."/>
            <person name="Gunter L."/>
            <person name="Hamberger B."/>
            <person name="Jansson S."/>
            <person name="Joshi C."/>
            <person name="Larimer F."/>
            <person name="Martin F."/>
            <person name="Napoli C."/>
            <person name="Nelson D."/>
            <person name="Ralph S."/>
            <person name="Rombauts S."/>
            <person name="Rouze P."/>
            <person name="Schrader J."/>
            <person name="Tsai C."/>
            <person name="Vahala J."/>
            <person name="Tuskan G."/>
            <person name="Rokhsar D."/>
        </authorList>
    </citation>
    <scope>GENOME REANNOTATION</scope>
    <source>
        <strain>cv. Nisqually</strain>
    </source>
</reference>
<reference key="3">
    <citation type="journal article" date="2014" name="Plant Physiol.">
        <title>Functional and evolutionary analysis of the CASPARIAN STRIP MEMBRANE DOMAIN PROTEIN family.</title>
        <authorList>
            <person name="Roppolo D."/>
            <person name="Boeckmann B."/>
            <person name="Pfister A."/>
            <person name="Boutet E."/>
            <person name="Rubio M.C."/>
            <person name="Denervaud-Tendon V."/>
            <person name="Vermeer J.E."/>
            <person name="Gheyselinck J."/>
            <person name="Xenarios I."/>
            <person name="Geldner N."/>
        </authorList>
    </citation>
    <scope>GENE FAMILY</scope>
    <scope>NOMENCLATURE</scope>
</reference>
<name>CSPL8_POPTR</name>
<dbReference type="EMBL" id="CM009290">
    <property type="protein sequence ID" value="EEE85285.2"/>
    <property type="molecule type" value="Genomic_DNA"/>
</dbReference>
<dbReference type="RefSeq" id="XP_002300480.2">
    <property type="nucleotide sequence ID" value="XM_002300444.2"/>
</dbReference>
<dbReference type="FunCoup" id="B9GHX8">
    <property type="interactions" value="1098"/>
</dbReference>
<dbReference type="STRING" id="3694.B9GHX8"/>
<dbReference type="EnsemblPlants" id="Potri.001G436400.1.v4.1">
    <property type="protein sequence ID" value="Potri.001G436400.1.v4.1"/>
    <property type="gene ID" value="Potri.001G436400.v4.1"/>
</dbReference>
<dbReference type="Gramene" id="Potri.001G436400.1.v4.1">
    <property type="protein sequence ID" value="Potri.001G436400.1.v4.1"/>
    <property type="gene ID" value="Potri.001G436400.v4.1"/>
</dbReference>
<dbReference type="KEGG" id="pop:7459167"/>
<dbReference type="eggNOG" id="ENOG502S0J7">
    <property type="taxonomic scope" value="Eukaryota"/>
</dbReference>
<dbReference type="HOGENOM" id="CLU_066104_2_2_1"/>
<dbReference type="InParanoid" id="B9GHX8"/>
<dbReference type="OMA" id="TWSSACE"/>
<dbReference type="OrthoDB" id="749363at2759"/>
<dbReference type="Proteomes" id="UP000006729">
    <property type="component" value="Chromosome 1"/>
</dbReference>
<dbReference type="ExpressionAtlas" id="B9GHX8">
    <property type="expression patterns" value="differential"/>
</dbReference>
<dbReference type="GO" id="GO:0005886">
    <property type="term" value="C:plasma membrane"/>
    <property type="evidence" value="ECO:0007669"/>
    <property type="project" value="UniProtKB-SubCell"/>
</dbReference>
<dbReference type="InterPro" id="IPR006459">
    <property type="entry name" value="CASP/CASPL"/>
</dbReference>
<dbReference type="InterPro" id="IPR006702">
    <property type="entry name" value="CASP_dom"/>
</dbReference>
<dbReference type="NCBIfam" id="TIGR01569">
    <property type="entry name" value="A_tha_TIGR01569"/>
    <property type="match status" value="1"/>
</dbReference>
<dbReference type="PANTHER" id="PTHR33573:SF46">
    <property type="entry name" value="CASP-LIKE PROTEIN 2A1"/>
    <property type="match status" value="1"/>
</dbReference>
<dbReference type="PANTHER" id="PTHR33573">
    <property type="entry name" value="CASP-LIKE PROTEIN 4A4"/>
    <property type="match status" value="1"/>
</dbReference>
<dbReference type="Pfam" id="PF04535">
    <property type="entry name" value="CASP_dom"/>
    <property type="match status" value="1"/>
</dbReference>
<proteinExistence type="inferred from homology"/>
<protein>
    <recommendedName>
        <fullName>CASP-like protein 2A2</fullName>
        <shortName>PtCASPL2A2</shortName>
    </recommendedName>
</protein>
<keyword id="KW-1003">Cell membrane</keyword>
<keyword id="KW-0472">Membrane</keyword>
<keyword id="KW-1185">Reference proteome</keyword>
<keyword id="KW-0812">Transmembrane</keyword>
<keyword id="KW-1133">Transmembrane helix</keyword>
<sequence>MEKKDEGNPPMAVMGSRDENEDVKSTMRTAETMLRLVPVALCVSALVVMLKNTQTNDYGSLSYSDLGAFRYLVNANGICAGYSLLSAVIVAMPRAWTMPQAWTFFLLDQVLTYVILAAGTVSTEVLYLANKGDTSIAWSAACASFGGFCHKALISTVITFVAVIFYAALSLVSSYKLFSKYDAPVVTQSGEGIKTVTLGSPPPPPPPPPSNLHLHLHAKLACPAHNNSPN</sequence>
<gene>
    <name type="ORF">POPTRDRAFT_1070325</name>
</gene>
<comment type="subunit">
    <text evidence="1">Homodimer and heterodimers.</text>
</comment>
<comment type="subcellular location">
    <subcellularLocation>
        <location evidence="1">Cell membrane</location>
        <topology evidence="1">Multi-pass membrane protein</topology>
    </subcellularLocation>
</comment>
<comment type="similarity">
    <text evidence="4">Belongs to the Casparian strip membrane proteins (CASP) family.</text>
</comment>
<organism>
    <name type="scientific">Populus trichocarpa</name>
    <name type="common">Western balsam poplar</name>
    <name type="synonym">Populus balsamifera subsp. trichocarpa</name>
    <dbReference type="NCBI Taxonomy" id="3694"/>
    <lineage>
        <taxon>Eukaryota</taxon>
        <taxon>Viridiplantae</taxon>
        <taxon>Streptophyta</taxon>
        <taxon>Embryophyta</taxon>
        <taxon>Tracheophyta</taxon>
        <taxon>Spermatophyta</taxon>
        <taxon>Magnoliopsida</taxon>
        <taxon>eudicotyledons</taxon>
        <taxon>Gunneridae</taxon>
        <taxon>Pentapetalae</taxon>
        <taxon>rosids</taxon>
        <taxon>fabids</taxon>
        <taxon>Malpighiales</taxon>
        <taxon>Salicaceae</taxon>
        <taxon>Saliceae</taxon>
        <taxon>Populus</taxon>
    </lineage>
</organism>